<feature type="chain" id="PRO_0000380114" description="Putative thiamine pyrophosphate-containing protein YdaP">
    <location>
        <begin position="1"/>
        <end position="574"/>
    </location>
</feature>
<feature type="region of interest" description="Thiamine pyrophosphate binding" evidence="1">
    <location>
        <begin position="384"/>
        <end position="464"/>
    </location>
</feature>
<feature type="coiled-coil region" evidence="2">
    <location>
        <begin position="28"/>
        <end position="55"/>
    </location>
</feature>
<feature type="binding site" evidence="1">
    <location>
        <position position="52"/>
    </location>
    <ligand>
        <name>thiamine diphosphate</name>
        <dbReference type="ChEBI" id="CHEBI:58937"/>
    </ligand>
</feature>
<feature type="binding site" evidence="1">
    <location>
        <begin position="256"/>
        <end position="277"/>
    </location>
    <ligand>
        <name>FAD</name>
        <dbReference type="ChEBI" id="CHEBI:57692"/>
    </ligand>
</feature>
<feature type="binding site" evidence="1">
    <location>
        <begin position="294"/>
        <end position="313"/>
    </location>
    <ligand>
        <name>FAD</name>
        <dbReference type="ChEBI" id="CHEBI:57692"/>
    </ligand>
</feature>
<feature type="binding site" evidence="1">
    <location>
        <position position="435"/>
    </location>
    <ligand>
        <name>Mg(2+)</name>
        <dbReference type="ChEBI" id="CHEBI:18420"/>
    </ligand>
</feature>
<feature type="binding site" evidence="1">
    <location>
        <position position="462"/>
    </location>
    <ligand>
        <name>Mg(2+)</name>
        <dbReference type="ChEBI" id="CHEBI:18420"/>
    </ligand>
</feature>
<sequence length="574" mass="63138">MAHKTAGQAMTELLEQWGVDHVYGIPGDSINEFIEELRHERNQLKFIQTRHEEVAALAAAAEAKLTGKIGVCLSIAGPGAVHLLNGLYDAKADGAPVLAIAGQVSSGEVGRDYFQEIKLEQMFEDVAVFNREVHSAESLPDLLNQAIRTAYSKKGVAVLSVSDDLFAEKIKREPVYTSPVYIEGNLEPKKEQLVTCAQYINNAKKPIILAGQGMKKAKRELLEFADKAAAPIVVTLPAKGVVPDKHPHFLGNLGQIGTKPAYEAMEECDLLIMLGTSFPYRDYLPDDTPAIQLDSDPAKIGKRYPVTAGLVCDSALGLRELTEYIERKEDRRFLNACTEHMQHWWNEIEKDETEATTPLKPQQVVARLQEAAADDAVLSVDVGTVTVWMARHFKMNANQDFIVSSWLATMGCGLPGAIAASLSEPERQAIAVCGDGGFSMVMQDLPTAVKYKLPITVVILNNENLGMIEYEQQVKGNIDYVTKLQNVDYAAFAESCGAKGIKVTKAEELAPAFHEALHSDQPVVVDVMIGNEPPLPGKITYGQAKGFSKYMLKNFFENQKFEMPSLKKSLKRLF</sequence>
<organism>
    <name type="scientific">Bacillus subtilis (strain 168)</name>
    <dbReference type="NCBI Taxonomy" id="224308"/>
    <lineage>
        <taxon>Bacteria</taxon>
        <taxon>Bacillati</taxon>
        <taxon>Bacillota</taxon>
        <taxon>Bacilli</taxon>
        <taxon>Bacillales</taxon>
        <taxon>Bacillaceae</taxon>
        <taxon>Bacillus</taxon>
    </lineage>
</organism>
<protein>
    <recommendedName>
        <fullName>Putative thiamine pyrophosphate-containing protein YdaP</fullName>
    </recommendedName>
</protein>
<reference key="1">
    <citation type="submission" date="1997-03" db="EMBL/GenBank/DDBJ databases">
        <title>A 148 kbp sequence of the region between 35 and 47 degree of the Bacillus subtilis genome.</title>
        <authorList>
            <person name="Kasahara Y."/>
            <person name="Nakai S."/>
            <person name="Lee S."/>
            <person name="Sadaie Y."/>
            <person name="Ogasawara N."/>
        </authorList>
    </citation>
    <scope>NUCLEOTIDE SEQUENCE [GENOMIC DNA]</scope>
    <source>
        <strain>168</strain>
    </source>
</reference>
<reference key="2">
    <citation type="journal article" date="1997" name="Nature">
        <title>The complete genome sequence of the Gram-positive bacterium Bacillus subtilis.</title>
        <authorList>
            <person name="Kunst F."/>
            <person name="Ogasawara N."/>
            <person name="Moszer I."/>
            <person name="Albertini A.M."/>
            <person name="Alloni G."/>
            <person name="Azevedo V."/>
            <person name="Bertero M.G."/>
            <person name="Bessieres P."/>
            <person name="Bolotin A."/>
            <person name="Borchert S."/>
            <person name="Borriss R."/>
            <person name="Boursier L."/>
            <person name="Brans A."/>
            <person name="Braun M."/>
            <person name="Brignell S.C."/>
            <person name="Bron S."/>
            <person name="Brouillet S."/>
            <person name="Bruschi C.V."/>
            <person name="Caldwell B."/>
            <person name="Capuano V."/>
            <person name="Carter N.M."/>
            <person name="Choi S.-K."/>
            <person name="Codani J.-J."/>
            <person name="Connerton I.F."/>
            <person name="Cummings N.J."/>
            <person name="Daniel R.A."/>
            <person name="Denizot F."/>
            <person name="Devine K.M."/>
            <person name="Duesterhoeft A."/>
            <person name="Ehrlich S.D."/>
            <person name="Emmerson P.T."/>
            <person name="Entian K.-D."/>
            <person name="Errington J."/>
            <person name="Fabret C."/>
            <person name="Ferrari E."/>
            <person name="Foulger D."/>
            <person name="Fritz C."/>
            <person name="Fujita M."/>
            <person name="Fujita Y."/>
            <person name="Fuma S."/>
            <person name="Galizzi A."/>
            <person name="Galleron N."/>
            <person name="Ghim S.-Y."/>
            <person name="Glaser P."/>
            <person name="Goffeau A."/>
            <person name="Golightly E.J."/>
            <person name="Grandi G."/>
            <person name="Guiseppi G."/>
            <person name="Guy B.J."/>
            <person name="Haga K."/>
            <person name="Haiech J."/>
            <person name="Harwood C.R."/>
            <person name="Henaut A."/>
            <person name="Hilbert H."/>
            <person name="Holsappel S."/>
            <person name="Hosono S."/>
            <person name="Hullo M.-F."/>
            <person name="Itaya M."/>
            <person name="Jones L.-M."/>
            <person name="Joris B."/>
            <person name="Karamata D."/>
            <person name="Kasahara Y."/>
            <person name="Klaerr-Blanchard M."/>
            <person name="Klein C."/>
            <person name="Kobayashi Y."/>
            <person name="Koetter P."/>
            <person name="Koningstein G."/>
            <person name="Krogh S."/>
            <person name="Kumano M."/>
            <person name="Kurita K."/>
            <person name="Lapidus A."/>
            <person name="Lardinois S."/>
            <person name="Lauber J."/>
            <person name="Lazarevic V."/>
            <person name="Lee S.-M."/>
            <person name="Levine A."/>
            <person name="Liu H."/>
            <person name="Masuda S."/>
            <person name="Mauel C."/>
            <person name="Medigue C."/>
            <person name="Medina N."/>
            <person name="Mellado R.P."/>
            <person name="Mizuno M."/>
            <person name="Moestl D."/>
            <person name="Nakai S."/>
            <person name="Noback M."/>
            <person name="Noone D."/>
            <person name="O'Reilly M."/>
            <person name="Ogawa K."/>
            <person name="Ogiwara A."/>
            <person name="Oudega B."/>
            <person name="Park S.-H."/>
            <person name="Parro V."/>
            <person name="Pohl T.M."/>
            <person name="Portetelle D."/>
            <person name="Porwollik S."/>
            <person name="Prescott A.M."/>
            <person name="Presecan E."/>
            <person name="Pujic P."/>
            <person name="Purnelle B."/>
            <person name="Rapoport G."/>
            <person name="Rey M."/>
            <person name="Reynolds S."/>
            <person name="Rieger M."/>
            <person name="Rivolta C."/>
            <person name="Rocha E."/>
            <person name="Roche B."/>
            <person name="Rose M."/>
            <person name="Sadaie Y."/>
            <person name="Sato T."/>
            <person name="Scanlan E."/>
            <person name="Schleich S."/>
            <person name="Schroeter R."/>
            <person name="Scoffone F."/>
            <person name="Sekiguchi J."/>
            <person name="Sekowska A."/>
            <person name="Seror S.J."/>
            <person name="Serror P."/>
            <person name="Shin B.-S."/>
            <person name="Soldo B."/>
            <person name="Sorokin A."/>
            <person name="Tacconi E."/>
            <person name="Takagi T."/>
            <person name="Takahashi H."/>
            <person name="Takemaru K."/>
            <person name="Takeuchi M."/>
            <person name="Tamakoshi A."/>
            <person name="Tanaka T."/>
            <person name="Terpstra P."/>
            <person name="Tognoni A."/>
            <person name="Tosato V."/>
            <person name="Uchiyama S."/>
            <person name="Vandenbol M."/>
            <person name="Vannier F."/>
            <person name="Vassarotti A."/>
            <person name="Viari A."/>
            <person name="Wambutt R."/>
            <person name="Wedler E."/>
            <person name="Wedler H."/>
            <person name="Weitzenegger T."/>
            <person name="Winters P."/>
            <person name="Wipat A."/>
            <person name="Yamamoto H."/>
            <person name="Yamane K."/>
            <person name="Yasumoto K."/>
            <person name="Yata K."/>
            <person name="Yoshida K."/>
            <person name="Yoshikawa H.-F."/>
            <person name="Zumstein E."/>
            <person name="Yoshikawa H."/>
            <person name="Danchin A."/>
        </authorList>
    </citation>
    <scope>NUCLEOTIDE SEQUENCE [LARGE SCALE GENOMIC DNA]</scope>
    <source>
        <strain>168</strain>
    </source>
</reference>
<reference key="3">
    <citation type="journal article" date="1999" name="Microbiology">
        <title>Identification and transcriptional analysis of new members of the sigmaB regulon in Bacillus subtilis.</title>
        <authorList>
            <person name="Petersohn A."/>
            <person name="Antelmann H."/>
            <person name="Gerth U."/>
            <person name="Hecker M."/>
        </authorList>
    </citation>
    <scope>REGULATION</scope>
    <source>
        <strain>168</strain>
    </source>
</reference>
<name>YDAP_BACSU</name>
<dbReference type="EMBL" id="AB001488">
    <property type="protein sequence ID" value="BAA19271.1"/>
    <property type="molecule type" value="Genomic_DNA"/>
</dbReference>
<dbReference type="EMBL" id="AL009126">
    <property type="protein sequence ID" value="CAB12241.1"/>
    <property type="molecule type" value="Genomic_DNA"/>
</dbReference>
<dbReference type="PIR" id="G69769">
    <property type="entry name" value="G69769"/>
</dbReference>
<dbReference type="RefSeq" id="WP_003246569.1">
    <property type="nucleotide sequence ID" value="NZ_OZ025638.1"/>
</dbReference>
<dbReference type="SMR" id="P96591"/>
<dbReference type="FunCoup" id="P96591">
    <property type="interactions" value="258"/>
</dbReference>
<dbReference type="IntAct" id="P96591">
    <property type="interactions" value="1"/>
</dbReference>
<dbReference type="STRING" id="224308.BSU04340"/>
<dbReference type="PaxDb" id="224308-BSU04340"/>
<dbReference type="EnsemblBacteria" id="CAB12241">
    <property type="protein sequence ID" value="CAB12241"/>
    <property type="gene ID" value="BSU_04340"/>
</dbReference>
<dbReference type="GeneID" id="938239"/>
<dbReference type="KEGG" id="bsu:BSU04340"/>
<dbReference type="PATRIC" id="fig|224308.179.peg.460"/>
<dbReference type="eggNOG" id="COG0028">
    <property type="taxonomic scope" value="Bacteria"/>
</dbReference>
<dbReference type="InParanoid" id="P96591"/>
<dbReference type="OrthoDB" id="4494979at2"/>
<dbReference type="PhylomeDB" id="P96591"/>
<dbReference type="BioCyc" id="BSUB:BSU04340-MONOMER"/>
<dbReference type="Proteomes" id="UP000001570">
    <property type="component" value="Chromosome"/>
</dbReference>
<dbReference type="GO" id="GO:0003824">
    <property type="term" value="F:catalytic activity"/>
    <property type="evidence" value="ECO:0007669"/>
    <property type="project" value="InterPro"/>
</dbReference>
<dbReference type="GO" id="GO:0000287">
    <property type="term" value="F:magnesium ion binding"/>
    <property type="evidence" value="ECO:0007669"/>
    <property type="project" value="InterPro"/>
</dbReference>
<dbReference type="GO" id="GO:0030976">
    <property type="term" value="F:thiamine pyrophosphate binding"/>
    <property type="evidence" value="ECO:0007669"/>
    <property type="project" value="InterPro"/>
</dbReference>
<dbReference type="CDD" id="cd02014">
    <property type="entry name" value="TPP_POX"/>
    <property type="match status" value="1"/>
</dbReference>
<dbReference type="CDD" id="cd07039">
    <property type="entry name" value="TPP_PYR_POX"/>
    <property type="match status" value="1"/>
</dbReference>
<dbReference type="Gene3D" id="3.40.50.970">
    <property type="match status" value="2"/>
</dbReference>
<dbReference type="Gene3D" id="3.40.50.1220">
    <property type="entry name" value="TPP-binding domain"/>
    <property type="match status" value="1"/>
</dbReference>
<dbReference type="InterPro" id="IPR029035">
    <property type="entry name" value="DHS-like_NAD/FAD-binding_dom"/>
</dbReference>
<dbReference type="InterPro" id="IPR047211">
    <property type="entry name" value="POXB-like"/>
</dbReference>
<dbReference type="InterPro" id="IPR029061">
    <property type="entry name" value="THDP-binding"/>
</dbReference>
<dbReference type="InterPro" id="IPR012000">
    <property type="entry name" value="Thiamin_PyroP_enz_cen_dom"/>
</dbReference>
<dbReference type="InterPro" id="IPR012001">
    <property type="entry name" value="Thiamin_PyroP_enz_TPP-bd_dom"/>
</dbReference>
<dbReference type="InterPro" id="IPR000399">
    <property type="entry name" value="TPP-bd_CS"/>
</dbReference>
<dbReference type="InterPro" id="IPR011766">
    <property type="entry name" value="TPP_enzyme_TPP-bd"/>
</dbReference>
<dbReference type="InterPro" id="IPR047212">
    <property type="entry name" value="TPP_POXB-like"/>
</dbReference>
<dbReference type="InterPro" id="IPR047210">
    <property type="entry name" value="TPP_PYR_POXB-like"/>
</dbReference>
<dbReference type="NCBIfam" id="NF006377">
    <property type="entry name" value="PRK08611.1"/>
    <property type="match status" value="1"/>
</dbReference>
<dbReference type="PANTHER" id="PTHR42981">
    <property type="entry name" value="PYRUVATE DEHYDROGENASE [UBIQUINONE]"/>
    <property type="match status" value="1"/>
</dbReference>
<dbReference type="PANTHER" id="PTHR42981:SF2">
    <property type="entry name" value="PYRUVATE DEHYDROGENASE [UBIQUINONE]"/>
    <property type="match status" value="1"/>
</dbReference>
<dbReference type="Pfam" id="PF02775">
    <property type="entry name" value="TPP_enzyme_C"/>
    <property type="match status" value="1"/>
</dbReference>
<dbReference type="Pfam" id="PF00205">
    <property type="entry name" value="TPP_enzyme_M"/>
    <property type="match status" value="1"/>
</dbReference>
<dbReference type="Pfam" id="PF02776">
    <property type="entry name" value="TPP_enzyme_N"/>
    <property type="match status" value="1"/>
</dbReference>
<dbReference type="SUPFAM" id="SSF52467">
    <property type="entry name" value="DHS-like NAD/FAD-binding domain"/>
    <property type="match status" value="1"/>
</dbReference>
<dbReference type="SUPFAM" id="SSF52518">
    <property type="entry name" value="Thiamin diphosphate-binding fold (THDP-binding)"/>
    <property type="match status" value="2"/>
</dbReference>
<dbReference type="PROSITE" id="PS00187">
    <property type="entry name" value="TPP_ENZYMES"/>
    <property type="match status" value="1"/>
</dbReference>
<gene>
    <name type="primary">ydaP</name>
    <name type="ordered locus">BSU04340</name>
</gene>
<proteinExistence type="evidence at transcript level"/>
<accession>P96591</accession>
<accession>Q797M1</accession>
<evidence type="ECO:0000250" key="1"/>
<evidence type="ECO:0000255" key="2"/>
<evidence type="ECO:0000305" key="3"/>
<keyword id="KW-0175">Coiled coil</keyword>
<keyword id="KW-0274">FAD</keyword>
<keyword id="KW-0285">Flavoprotein</keyword>
<keyword id="KW-0460">Magnesium</keyword>
<keyword id="KW-0479">Metal-binding</keyword>
<keyword id="KW-1185">Reference proteome</keyword>
<keyword id="KW-0786">Thiamine pyrophosphate</keyword>
<comment type="cofactor">
    <cofactor evidence="3">
        <name>Mg(2+)</name>
        <dbReference type="ChEBI" id="CHEBI:18420"/>
    </cofactor>
    <text evidence="3">Binds 1 Mg(2+) ion per subunit.</text>
</comment>
<comment type="cofactor">
    <cofactor evidence="3">
        <name>thiamine diphosphate</name>
        <dbReference type="ChEBI" id="CHEBI:58937"/>
    </cofactor>
    <text evidence="3">Binds 1 thiamine pyrophosphate per subunit.</text>
</comment>
<comment type="induction">
    <text>Transcriptionally regulated by SigB.</text>
</comment>
<comment type="similarity">
    <text evidence="3">Belongs to the TPP enzyme family.</text>
</comment>